<comment type="function">
    <text evidence="1">Hydrolyzes with equal efficiency cytidine or uridine to ribose and cytosine or uracil, respectively.</text>
</comment>
<comment type="similarity">
    <text evidence="1">Belongs to the IUNH family. RihA subfamily.</text>
</comment>
<accession>B1LLA1</accession>
<feature type="chain" id="PRO_1000145795" description="Pyrimidine-specific ribonucleoside hydrolase RihA">
    <location>
        <begin position="1"/>
        <end position="311"/>
    </location>
</feature>
<feature type="active site" evidence="1">
    <location>
        <position position="240"/>
    </location>
</feature>
<protein>
    <recommendedName>
        <fullName evidence="1">Pyrimidine-specific ribonucleoside hydrolase RihA</fullName>
        <ecNumber evidence="1">3.2.-.-</ecNumber>
    </recommendedName>
    <alternativeName>
        <fullName evidence="1">Cytidine/uridine-specific hydrolase</fullName>
    </alternativeName>
</protein>
<sequence length="311" mass="33805">MALPILLDCDPGHDDAIAIVLALASPELDVKAITSSAGNQTPEKTLRNVLCMLTLLNRTDIPVASGAVKPLMRDLIIADNVHGESGLDGPALPEPTFAPQNCTAVELMAKTLCESEEPVTIVSTGPQTNVALLLNSHPELHSKIARIVIMGGAMGLGNWTPAAEFNIYVDPEAAEIVFQSGIPVVMAGLDVTHKAQIHVEDTERFRAIGNPVSTIVAELLDFFLEYHKDEKWGFVGAPLHDPCTIAWLLKPELFTTVERWVGVETQGKYTQGMTVVDYYYLTGNKPNATVMVDVDRQGFVDLLADRLKFYA</sequence>
<dbReference type="EC" id="3.2.-.-" evidence="1"/>
<dbReference type="EMBL" id="CP000970">
    <property type="protein sequence ID" value="ACB19908.1"/>
    <property type="molecule type" value="Genomic_DNA"/>
</dbReference>
<dbReference type="RefSeq" id="WP_001207493.1">
    <property type="nucleotide sequence ID" value="NC_010498.1"/>
</dbReference>
<dbReference type="SMR" id="B1LLA1"/>
<dbReference type="KEGG" id="ecm:EcSMS35_0672"/>
<dbReference type="HOGENOM" id="CLU_036838_2_0_6"/>
<dbReference type="Proteomes" id="UP000007011">
    <property type="component" value="Chromosome"/>
</dbReference>
<dbReference type="GO" id="GO:0005829">
    <property type="term" value="C:cytosol"/>
    <property type="evidence" value="ECO:0007669"/>
    <property type="project" value="TreeGrafter"/>
</dbReference>
<dbReference type="GO" id="GO:0008477">
    <property type="term" value="F:purine nucleosidase activity"/>
    <property type="evidence" value="ECO:0007669"/>
    <property type="project" value="TreeGrafter"/>
</dbReference>
<dbReference type="GO" id="GO:0045437">
    <property type="term" value="F:uridine nucleosidase activity"/>
    <property type="evidence" value="ECO:0007669"/>
    <property type="project" value="InterPro"/>
</dbReference>
<dbReference type="GO" id="GO:0015949">
    <property type="term" value="P:nucleobase-containing small molecule interconversion"/>
    <property type="evidence" value="ECO:0007669"/>
    <property type="project" value="InterPro"/>
</dbReference>
<dbReference type="GO" id="GO:0006152">
    <property type="term" value="P:purine nucleoside catabolic process"/>
    <property type="evidence" value="ECO:0007669"/>
    <property type="project" value="TreeGrafter"/>
</dbReference>
<dbReference type="GO" id="GO:0006206">
    <property type="term" value="P:pyrimidine nucleobase metabolic process"/>
    <property type="evidence" value="ECO:0007669"/>
    <property type="project" value="UniProtKB-UniRule"/>
</dbReference>
<dbReference type="CDD" id="cd02651">
    <property type="entry name" value="nuc_hydro_IU_UC_XIUA"/>
    <property type="match status" value="1"/>
</dbReference>
<dbReference type="FunFam" id="3.90.245.10:FF:000001">
    <property type="entry name" value="Pyrimidine-specific ribonucleoside hydrolase RihA"/>
    <property type="match status" value="1"/>
</dbReference>
<dbReference type="Gene3D" id="3.90.245.10">
    <property type="entry name" value="Ribonucleoside hydrolase-like"/>
    <property type="match status" value="1"/>
</dbReference>
<dbReference type="HAMAP" id="MF_01431">
    <property type="entry name" value="Pyrim_hydro_RihA"/>
    <property type="match status" value="1"/>
</dbReference>
<dbReference type="InterPro" id="IPR015910">
    <property type="entry name" value="I/U_nuclsd_hydro_CS"/>
</dbReference>
<dbReference type="InterPro" id="IPR001910">
    <property type="entry name" value="Inosine/uridine_hydrolase_dom"/>
</dbReference>
<dbReference type="InterPro" id="IPR023186">
    <property type="entry name" value="IUNH"/>
</dbReference>
<dbReference type="InterPro" id="IPR022975">
    <property type="entry name" value="Pyrim_hydro_RihA"/>
</dbReference>
<dbReference type="InterPro" id="IPR036452">
    <property type="entry name" value="Ribo_hydro-like"/>
</dbReference>
<dbReference type="NCBIfam" id="NF007761">
    <property type="entry name" value="PRK10443.1"/>
    <property type="match status" value="1"/>
</dbReference>
<dbReference type="PANTHER" id="PTHR12304">
    <property type="entry name" value="INOSINE-URIDINE PREFERRING NUCLEOSIDE HYDROLASE"/>
    <property type="match status" value="1"/>
</dbReference>
<dbReference type="PANTHER" id="PTHR12304:SF4">
    <property type="entry name" value="URIDINE NUCLEOSIDASE"/>
    <property type="match status" value="1"/>
</dbReference>
<dbReference type="Pfam" id="PF01156">
    <property type="entry name" value="IU_nuc_hydro"/>
    <property type="match status" value="1"/>
</dbReference>
<dbReference type="SUPFAM" id="SSF53590">
    <property type="entry name" value="Nucleoside hydrolase"/>
    <property type="match status" value="1"/>
</dbReference>
<dbReference type="PROSITE" id="PS01247">
    <property type="entry name" value="IUNH"/>
    <property type="match status" value="1"/>
</dbReference>
<name>RIHA_ECOSM</name>
<gene>
    <name evidence="1" type="primary">rihA</name>
    <name type="ordered locus">EcSMS35_0672</name>
</gene>
<evidence type="ECO:0000255" key="1">
    <source>
        <dbReference type="HAMAP-Rule" id="MF_01431"/>
    </source>
</evidence>
<proteinExistence type="inferred from homology"/>
<keyword id="KW-0326">Glycosidase</keyword>
<keyword id="KW-0378">Hydrolase</keyword>
<organism>
    <name type="scientific">Escherichia coli (strain SMS-3-5 / SECEC)</name>
    <dbReference type="NCBI Taxonomy" id="439855"/>
    <lineage>
        <taxon>Bacteria</taxon>
        <taxon>Pseudomonadati</taxon>
        <taxon>Pseudomonadota</taxon>
        <taxon>Gammaproteobacteria</taxon>
        <taxon>Enterobacterales</taxon>
        <taxon>Enterobacteriaceae</taxon>
        <taxon>Escherichia</taxon>
    </lineage>
</organism>
<reference key="1">
    <citation type="journal article" date="2008" name="J. Bacteriol.">
        <title>Insights into the environmental resistance gene pool from the genome sequence of the multidrug-resistant environmental isolate Escherichia coli SMS-3-5.</title>
        <authorList>
            <person name="Fricke W.F."/>
            <person name="Wright M.S."/>
            <person name="Lindell A.H."/>
            <person name="Harkins D.M."/>
            <person name="Baker-Austin C."/>
            <person name="Ravel J."/>
            <person name="Stepanauskas R."/>
        </authorList>
    </citation>
    <scope>NUCLEOTIDE SEQUENCE [LARGE SCALE GENOMIC DNA]</scope>
    <source>
        <strain>SMS-3-5 / SECEC</strain>
    </source>
</reference>